<proteinExistence type="inferred from homology"/>
<dbReference type="EC" id="2.3.1.8"/>
<dbReference type="EMBL" id="CP000359">
    <property type="protein sequence ID" value="ABF44354.1"/>
    <property type="molecule type" value="Genomic_DNA"/>
</dbReference>
<dbReference type="RefSeq" id="WP_011529201.1">
    <property type="nucleotide sequence ID" value="NC_008025.1"/>
</dbReference>
<dbReference type="SMR" id="Q1J2D0"/>
<dbReference type="STRING" id="319795.Dgeo_0051"/>
<dbReference type="KEGG" id="dge:Dgeo_0051"/>
<dbReference type="eggNOG" id="COG0280">
    <property type="taxonomic scope" value="Bacteria"/>
</dbReference>
<dbReference type="eggNOG" id="COG0857">
    <property type="taxonomic scope" value="Bacteria"/>
</dbReference>
<dbReference type="HOGENOM" id="CLU_019723_2_1_0"/>
<dbReference type="UniPathway" id="UPA00340">
    <property type="reaction ID" value="UER00459"/>
</dbReference>
<dbReference type="Proteomes" id="UP000002431">
    <property type="component" value="Chromosome"/>
</dbReference>
<dbReference type="GO" id="GO:0005737">
    <property type="term" value="C:cytoplasm"/>
    <property type="evidence" value="ECO:0007669"/>
    <property type="project" value="UniProtKB-SubCell"/>
</dbReference>
<dbReference type="GO" id="GO:0008959">
    <property type="term" value="F:phosphate acetyltransferase activity"/>
    <property type="evidence" value="ECO:0007669"/>
    <property type="project" value="UniProtKB-EC"/>
</dbReference>
<dbReference type="GO" id="GO:0006085">
    <property type="term" value="P:acetyl-CoA biosynthetic process"/>
    <property type="evidence" value="ECO:0007669"/>
    <property type="project" value="UniProtKB-UniPathway"/>
</dbReference>
<dbReference type="CDD" id="cd03109">
    <property type="entry name" value="DTBS"/>
    <property type="match status" value="1"/>
</dbReference>
<dbReference type="FunFam" id="3.40.50.10750:FF:000001">
    <property type="entry name" value="Phosphate acetyltransferase"/>
    <property type="match status" value="1"/>
</dbReference>
<dbReference type="Gene3D" id="3.40.50.10950">
    <property type="match status" value="1"/>
</dbReference>
<dbReference type="Gene3D" id="3.40.1390.20">
    <property type="entry name" value="HprK N-terminal domain-like"/>
    <property type="match status" value="1"/>
</dbReference>
<dbReference type="Gene3D" id="3.40.50.10750">
    <property type="entry name" value="Isocitrate/Isopropylmalate dehydrogenase-like"/>
    <property type="match status" value="1"/>
</dbReference>
<dbReference type="Gene3D" id="3.40.50.300">
    <property type="entry name" value="P-loop containing nucleotide triphosphate hydrolases"/>
    <property type="match status" value="1"/>
</dbReference>
<dbReference type="InterPro" id="IPR010766">
    <property type="entry name" value="DRTGG"/>
</dbReference>
<dbReference type="InterPro" id="IPR016475">
    <property type="entry name" value="P-Actrans_bac"/>
</dbReference>
<dbReference type="InterPro" id="IPR027417">
    <property type="entry name" value="P-loop_NTPase"/>
</dbReference>
<dbReference type="InterPro" id="IPR004614">
    <property type="entry name" value="P_AcTrfase"/>
</dbReference>
<dbReference type="InterPro" id="IPR042113">
    <property type="entry name" value="P_AcTrfase_dom1"/>
</dbReference>
<dbReference type="InterPro" id="IPR042112">
    <property type="entry name" value="P_AcTrfase_dom2"/>
</dbReference>
<dbReference type="InterPro" id="IPR050500">
    <property type="entry name" value="Phos_Acetyltrans/Butyryltrans"/>
</dbReference>
<dbReference type="InterPro" id="IPR002505">
    <property type="entry name" value="PTA_PTB"/>
</dbReference>
<dbReference type="InterPro" id="IPR028979">
    <property type="entry name" value="Ser_kin/Pase_Hpr-like_N_sf"/>
</dbReference>
<dbReference type="NCBIfam" id="NF004167">
    <property type="entry name" value="PRK05632.1"/>
    <property type="match status" value="1"/>
</dbReference>
<dbReference type="NCBIfam" id="NF007233">
    <property type="entry name" value="PRK09653.1"/>
    <property type="match status" value="1"/>
</dbReference>
<dbReference type="NCBIfam" id="TIGR00651">
    <property type="entry name" value="pta"/>
    <property type="match status" value="1"/>
</dbReference>
<dbReference type="PANTHER" id="PTHR43356">
    <property type="entry name" value="PHOSPHATE ACETYLTRANSFERASE"/>
    <property type="match status" value="1"/>
</dbReference>
<dbReference type="PANTHER" id="PTHR43356:SF3">
    <property type="entry name" value="PHOSPHATE ACETYLTRANSFERASE"/>
    <property type="match status" value="1"/>
</dbReference>
<dbReference type="Pfam" id="PF13500">
    <property type="entry name" value="AAA_26"/>
    <property type="match status" value="1"/>
</dbReference>
<dbReference type="Pfam" id="PF07085">
    <property type="entry name" value="DRTGG"/>
    <property type="match status" value="1"/>
</dbReference>
<dbReference type="Pfam" id="PF01515">
    <property type="entry name" value="PTA_PTB"/>
    <property type="match status" value="1"/>
</dbReference>
<dbReference type="PIRSF" id="PIRSF006107">
    <property type="entry name" value="PhpActrans_proteobac"/>
    <property type="match status" value="1"/>
</dbReference>
<dbReference type="SUPFAM" id="SSF75138">
    <property type="entry name" value="HprK N-terminal domain-like"/>
    <property type="match status" value="1"/>
</dbReference>
<dbReference type="SUPFAM" id="SSF53659">
    <property type="entry name" value="Isocitrate/Isopropylmalate dehydrogenase-like"/>
    <property type="match status" value="1"/>
</dbReference>
<dbReference type="SUPFAM" id="SSF52540">
    <property type="entry name" value="P-loop containing nucleoside triphosphate hydrolases"/>
    <property type="match status" value="1"/>
</dbReference>
<keyword id="KW-0012">Acyltransferase</keyword>
<keyword id="KW-0963">Cytoplasm</keyword>
<keyword id="KW-0808">Transferase</keyword>
<protein>
    <recommendedName>
        <fullName>Phosphate acetyltransferase</fullName>
        <ecNumber>2.3.1.8</ecNumber>
    </recommendedName>
    <alternativeName>
        <fullName>Phosphotransacetylase</fullName>
    </alternativeName>
</protein>
<evidence type="ECO:0000250" key="1"/>
<evidence type="ECO:0000305" key="2"/>
<name>PTA_DEIGD</name>
<feature type="chain" id="PRO_0000405545" description="Phosphate acetyltransferase">
    <location>
        <begin position="1"/>
        <end position="703"/>
    </location>
</feature>
<feature type="region of interest" description="Phosphate acetyltransferase">
    <location>
        <begin position="377"/>
        <end position="703"/>
    </location>
</feature>
<gene>
    <name type="primary">pta</name>
    <name type="ordered locus">Dgeo_0051</name>
</gene>
<organism>
    <name type="scientific">Deinococcus geothermalis (strain DSM 11300 / CIP 105573 / AG-3a)</name>
    <dbReference type="NCBI Taxonomy" id="319795"/>
    <lineage>
        <taxon>Bacteria</taxon>
        <taxon>Thermotogati</taxon>
        <taxon>Deinococcota</taxon>
        <taxon>Deinococci</taxon>
        <taxon>Deinococcales</taxon>
        <taxon>Deinococcaceae</taxon>
        <taxon>Deinococcus</taxon>
    </lineage>
</organism>
<reference key="1">
    <citation type="submission" date="2006-04" db="EMBL/GenBank/DDBJ databases">
        <title>Complete sequence of chromosome of Deinococcus geothermalis DSM 11300.</title>
        <authorList>
            <person name="Copeland A."/>
            <person name="Lucas S."/>
            <person name="Lapidus A."/>
            <person name="Barry K."/>
            <person name="Detter J.C."/>
            <person name="Glavina del Rio T."/>
            <person name="Hammon N."/>
            <person name="Israni S."/>
            <person name="Dalin E."/>
            <person name="Tice H."/>
            <person name="Pitluck S."/>
            <person name="Brettin T."/>
            <person name="Bruce D."/>
            <person name="Han C."/>
            <person name="Tapia R."/>
            <person name="Saunders E."/>
            <person name="Gilna P."/>
            <person name="Schmutz J."/>
            <person name="Larimer F."/>
            <person name="Land M."/>
            <person name="Hauser L."/>
            <person name="Kyrpides N."/>
            <person name="Kim E."/>
            <person name="Daly M.J."/>
            <person name="Fredrickson J.K."/>
            <person name="Makarova K.S."/>
            <person name="Gaidamakova E.K."/>
            <person name="Zhai M."/>
            <person name="Richardson P."/>
        </authorList>
    </citation>
    <scope>NUCLEOTIDE SEQUENCE [LARGE SCALE GENOMIC DNA]</scope>
    <source>
        <strain>DSM 11300 / CIP 105573 / AG-3a</strain>
    </source>
</reference>
<comment type="function">
    <text evidence="1">Involved in acetate metabolism.</text>
</comment>
<comment type="catalytic activity">
    <reaction>
        <text>acetyl-CoA + phosphate = acetyl phosphate + CoA</text>
        <dbReference type="Rhea" id="RHEA:19521"/>
        <dbReference type="ChEBI" id="CHEBI:22191"/>
        <dbReference type="ChEBI" id="CHEBI:43474"/>
        <dbReference type="ChEBI" id="CHEBI:57287"/>
        <dbReference type="ChEBI" id="CHEBI:57288"/>
        <dbReference type="EC" id="2.3.1.8"/>
    </reaction>
</comment>
<comment type="pathway">
    <text>Metabolic intermediate biosynthesis; acetyl-CoA biosynthesis; acetyl-CoA from acetate: step 2/2.</text>
</comment>
<comment type="subcellular location">
    <subcellularLocation>
        <location evidence="2">Cytoplasm</location>
    </subcellularLocation>
</comment>
<comment type="domain">
    <text evidence="1">The N-terminal region seems to be important for proper quaternary structure. The C-terminal region contains the substrate-binding site (By similarity).</text>
</comment>
<comment type="similarity">
    <text evidence="2">In the N-terminal section; belongs to the CobB/CobQ family.</text>
</comment>
<comment type="similarity">
    <text evidence="2">In the C-terminal section; belongs to the phosphate acetyltransferase and butyryltransferase family.</text>
</comment>
<sequence>MKTLFIAPTRNGVGLTSTALGLLRALERQGLKVAFLKPIAQTHEAAPDDSVHWARTLAHAVTPDPILLSVAEEQLSQGQEEELMENVVALAREAAAGVTGGADVLVVEGLALNERNVYAGPLNASLARNLEADVVLVSSLAGVTPATLADELEIAAQAYRRSDGSGLAGYVLNFAPLELDFGGLLADLRARSRILASGELPLLGVIAQSPTLAAPRTLDVARHLGAEVLNEGEARLRRVTSTVVTARSVPKMADLFTSGALVVTPGDREDVVMAAALSHLSGVPLAGLLFTSGSTPEAAIERLCRAALTSTLPVLRVETNSYNTASRLSRMEARVPHDDLERMERTLDFIADRLDTVPLGTRLRAPEGSERRLPPSAFRYELIQKARAANKRIVLPEGDEPRTVRAAIRCVEKGIARCVLLAQPEKVRQVAEGQGLTLPDGLEIIDPDRVRANYVAPMVELRKHKGLTAPQAEAQLEDNVVLGTMMLALDEVDGLVSGAVHTTANTVRPALQLIKTAPGVRLVSSIFFMLMPEQVVVYGDAAINPNPNAEELADIAIQSADSARAFGIPPRIAMLSYSTGESGAGADVEKVRIATRLVRERRPDLPVDGPLQYDAASVLSVGRQKAPNSPVAGRATVFIFPDLNTGNTTYKAVQRAAGVVAVGPMLQGLRKPVNDLSRGALVDDIVYTIALTAIQATQAREGA</sequence>
<accession>Q1J2D0</accession>